<organism>
    <name type="scientific">Halothermothrix orenii (strain H 168 / OCM 544 / DSM 9562)</name>
    <dbReference type="NCBI Taxonomy" id="373903"/>
    <lineage>
        <taxon>Bacteria</taxon>
        <taxon>Bacillati</taxon>
        <taxon>Bacillota</taxon>
        <taxon>Clostridia</taxon>
        <taxon>Halanaerobiales</taxon>
        <taxon>Halothermotrichaceae</taxon>
        <taxon>Halothermothrix</taxon>
    </lineage>
</organism>
<reference key="1">
    <citation type="journal article" date="2009" name="PLoS ONE">
        <title>Genome analysis of the anaerobic thermohalophilic bacterium Halothermothrix orenii.</title>
        <authorList>
            <person name="Mavromatis K."/>
            <person name="Ivanova N."/>
            <person name="Anderson I."/>
            <person name="Lykidis A."/>
            <person name="Hooper S.D."/>
            <person name="Sun H."/>
            <person name="Kunin V."/>
            <person name="Lapidus A."/>
            <person name="Hugenholtz P."/>
            <person name="Patel B."/>
            <person name="Kyrpides N.C."/>
        </authorList>
    </citation>
    <scope>NUCLEOTIDE SEQUENCE [LARGE SCALE GENOMIC DNA]</scope>
    <source>
        <strain>H 168 / OCM 544 / DSM 9562</strain>
    </source>
</reference>
<dbReference type="EC" id="6.3.5.7" evidence="1"/>
<dbReference type="EMBL" id="CP001098">
    <property type="protein sequence ID" value="ACL68994.1"/>
    <property type="molecule type" value="Genomic_DNA"/>
</dbReference>
<dbReference type="RefSeq" id="WP_012635192.1">
    <property type="nucleotide sequence ID" value="NC_011899.1"/>
</dbReference>
<dbReference type="SMR" id="B8D125"/>
<dbReference type="STRING" id="373903.Hore_02330"/>
<dbReference type="KEGG" id="hor:Hore_02330"/>
<dbReference type="eggNOG" id="COG0154">
    <property type="taxonomic scope" value="Bacteria"/>
</dbReference>
<dbReference type="HOGENOM" id="CLU_009600_0_3_9"/>
<dbReference type="OrthoDB" id="9811471at2"/>
<dbReference type="Proteomes" id="UP000000719">
    <property type="component" value="Chromosome"/>
</dbReference>
<dbReference type="GO" id="GO:0030956">
    <property type="term" value="C:glutamyl-tRNA(Gln) amidotransferase complex"/>
    <property type="evidence" value="ECO:0007669"/>
    <property type="project" value="InterPro"/>
</dbReference>
<dbReference type="GO" id="GO:0005524">
    <property type="term" value="F:ATP binding"/>
    <property type="evidence" value="ECO:0007669"/>
    <property type="project" value="UniProtKB-KW"/>
</dbReference>
<dbReference type="GO" id="GO:0050567">
    <property type="term" value="F:glutaminyl-tRNA synthase (glutamine-hydrolyzing) activity"/>
    <property type="evidence" value="ECO:0007669"/>
    <property type="project" value="UniProtKB-UniRule"/>
</dbReference>
<dbReference type="GO" id="GO:0006412">
    <property type="term" value="P:translation"/>
    <property type="evidence" value="ECO:0007669"/>
    <property type="project" value="UniProtKB-UniRule"/>
</dbReference>
<dbReference type="Gene3D" id="3.90.1300.10">
    <property type="entry name" value="Amidase signature (AS) domain"/>
    <property type="match status" value="1"/>
</dbReference>
<dbReference type="HAMAP" id="MF_00120">
    <property type="entry name" value="GatA"/>
    <property type="match status" value="1"/>
</dbReference>
<dbReference type="InterPro" id="IPR000120">
    <property type="entry name" value="Amidase"/>
</dbReference>
<dbReference type="InterPro" id="IPR020556">
    <property type="entry name" value="Amidase_CS"/>
</dbReference>
<dbReference type="InterPro" id="IPR023631">
    <property type="entry name" value="Amidase_dom"/>
</dbReference>
<dbReference type="InterPro" id="IPR036928">
    <property type="entry name" value="AS_sf"/>
</dbReference>
<dbReference type="InterPro" id="IPR004412">
    <property type="entry name" value="GatA"/>
</dbReference>
<dbReference type="NCBIfam" id="TIGR00132">
    <property type="entry name" value="gatA"/>
    <property type="match status" value="1"/>
</dbReference>
<dbReference type="PANTHER" id="PTHR11895:SF151">
    <property type="entry name" value="GLUTAMYL-TRNA(GLN) AMIDOTRANSFERASE SUBUNIT A"/>
    <property type="match status" value="1"/>
</dbReference>
<dbReference type="PANTHER" id="PTHR11895">
    <property type="entry name" value="TRANSAMIDASE"/>
    <property type="match status" value="1"/>
</dbReference>
<dbReference type="Pfam" id="PF01425">
    <property type="entry name" value="Amidase"/>
    <property type="match status" value="1"/>
</dbReference>
<dbReference type="SUPFAM" id="SSF75304">
    <property type="entry name" value="Amidase signature (AS) enzymes"/>
    <property type="match status" value="1"/>
</dbReference>
<dbReference type="PROSITE" id="PS00571">
    <property type="entry name" value="AMIDASES"/>
    <property type="match status" value="1"/>
</dbReference>
<keyword id="KW-0067">ATP-binding</keyword>
<keyword id="KW-0436">Ligase</keyword>
<keyword id="KW-0547">Nucleotide-binding</keyword>
<keyword id="KW-0648">Protein biosynthesis</keyword>
<keyword id="KW-1185">Reference proteome</keyword>
<protein>
    <recommendedName>
        <fullName evidence="1">Glutamyl-tRNA(Gln) amidotransferase subunit A</fullName>
        <shortName evidence="1">Glu-ADT subunit A</shortName>
        <ecNumber evidence="1">6.3.5.7</ecNumber>
    </recommendedName>
</protein>
<feature type="chain" id="PRO_1000122480" description="Glutamyl-tRNA(Gln) amidotransferase subunit A">
    <location>
        <begin position="1"/>
        <end position="477"/>
    </location>
</feature>
<feature type="active site" description="Charge relay system" evidence="1">
    <location>
        <position position="71"/>
    </location>
</feature>
<feature type="active site" description="Charge relay system" evidence="1">
    <location>
        <position position="146"/>
    </location>
</feature>
<feature type="active site" description="Acyl-ester intermediate" evidence="1">
    <location>
        <position position="170"/>
    </location>
</feature>
<gene>
    <name evidence="1" type="primary">gatA</name>
    <name type="ordered locus">Hore_02330</name>
</gene>
<sequence length="477" mass="52221">MELYDLTIHELRDLLRKEEVSPEEVLDSFYKRIDEVEDKVKAYVTLTRDEARNSLASLKDGRLAGIPLAIKDNISTRGIKTTCSSKILNNYKPPYDATVVKRLKEEGGITLGKTNMDEFAMGSSTENSGFYPTHNPWNLDHAPGGSSGGSAAAVAAGEAPGALGSDTGGSIRQPAAFCGVVGLKPTYGCVSRYGLVAFASSLDQIGPITKDVTDSALLLNVISGHDPMDSTSVDREKEDYTTYLKDDVKGMKIGLPEEYFSLDFNSEVKDKVMSAVKELEKAGAIVEEVSLPNIEYALAAYYIIAPAEASSNLARYDGVRYGYRSENGDSVRSMFTNTRSEGFGDEVKRRIMLGTYVLSSGYYDAFYLKAQKVRTLIKEDFERVFKDYDVLISPTTPTTAFKLGEMTDPLEMYQSDVFTVPVNIAGIPAISVPCGFDSNNLPIGLQIMGPHFGEGKILQTAYTLEQALNMKTKRPKL</sequence>
<name>GATA_HALOH</name>
<accession>B8D125</accession>
<proteinExistence type="inferred from homology"/>
<comment type="function">
    <text evidence="1">Allows the formation of correctly charged Gln-tRNA(Gln) through the transamidation of misacylated Glu-tRNA(Gln) in organisms which lack glutaminyl-tRNA synthetase. The reaction takes place in the presence of glutamine and ATP through an activated gamma-phospho-Glu-tRNA(Gln).</text>
</comment>
<comment type="catalytic activity">
    <reaction evidence="1">
        <text>L-glutamyl-tRNA(Gln) + L-glutamine + ATP + H2O = L-glutaminyl-tRNA(Gln) + L-glutamate + ADP + phosphate + H(+)</text>
        <dbReference type="Rhea" id="RHEA:17521"/>
        <dbReference type="Rhea" id="RHEA-COMP:9681"/>
        <dbReference type="Rhea" id="RHEA-COMP:9684"/>
        <dbReference type="ChEBI" id="CHEBI:15377"/>
        <dbReference type="ChEBI" id="CHEBI:15378"/>
        <dbReference type="ChEBI" id="CHEBI:29985"/>
        <dbReference type="ChEBI" id="CHEBI:30616"/>
        <dbReference type="ChEBI" id="CHEBI:43474"/>
        <dbReference type="ChEBI" id="CHEBI:58359"/>
        <dbReference type="ChEBI" id="CHEBI:78520"/>
        <dbReference type="ChEBI" id="CHEBI:78521"/>
        <dbReference type="ChEBI" id="CHEBI:456216"/>
        <dbReference type="EC" id="6.3.5.7"/>
    </reaction>
</comment>
<comment type="subunit">
    <text evidence="1">Heterotrimer of A, B and C subunits.</text>
</comment>
<comment type="similarity">
    <text evidence="1">Belongs to the amidase family. GatA subfamily.</text>
</comment>
<evidence type="ECO:0000255" key="1">
    <source>
        <dbReference type="HAMAP-Rule" id="MF_00120"/>
    </source>
</evidence>